<evidence type="ECO:0000250" key="1"/>
<evidence type="ECO:0000305" key="2"/>
<sequence length="409" mass="45656">MRGFGVHSEVGKLRTVMVCRPSLAHQRLTPANCHDLLFDDVLWVHEAQKDHFDFVLKMQERGVEVLELHDLLGQTLANQQARDFLLDRRITPNVLGSQIAEAMRPWLDEMPAAQLAAFMIGGIAISDLPEVKAKSLMLSALPETDFVIPPIPNTLFQRDPSCWIYGGVTCNPMFWPARRAETLIQRAIYKFHPIFLGGDFQIWWGDSDQPFANASMEGGDVMPIGNGTVLIGMGERTTYQAVGQVAQALFRSKAAKRVVGCLMPKSRAAMHLDTVFSFCDRDVVTLFAEVVDQVRCYSMYPKDDDGTFEIHPDNRPMLDVVAEALDLPQLRTVETGGNSYQAEREQWDDGNNVVALEPGVVVAYDRNTYTNTLLRKAGIEVITIRGSELGRGRGGGHCMTCPIWRDPAY</sequence>
<dbReference type="EC" id="3.5.3.6"/>
<dbReference type="EMBL" id="AF025543">
    <property type="protein sequence ID" value="AAC46018.1"/>
    <property type="molecule type" value="Genomic_DNA"/>
</dbReference>
<dbReference type="SMR" id="O31017"/>
<dbReference type="UniPathway" id="UPA00254">
    <property type="reaction ID" value="UER00364"/>
</dbReference>
<dbReference type="GO" id="GO:0005737">
    <property type="term" value="C:cytoplasm"/>
    <property type="evidence" value="ECO:0007669"/>
    <property type="project" value="UniProtKB-SubCell"/>
</dbReference>
<dbReference type="GO" id="GO:0016990">
    <property type="term" value="F:arginine deiminase activity"/>
    <property type="evidence" value="ECO:0007669"/>
    <property type="project" value="UniProtKB-UniRule"/>
</dbReference>
<dbReference type="GO" id="GO:0019547">
    <property type="term" value="P:arginine catabolic process to ornithine"/>
    <property type="evidence" value="ECO:0007669"/>
    <property type="project" value="UniProtKB-UniRule"/>
</dbReference>
<dbReference type="GO" id="GO:0019546">
    <property type="term" value="P:arginine deiminase pathway"/>
    <property type="evidence" value="ECO:0007669"/>
    <property type="project" value="TreeGrafter"/>
</dbReference>
<dbReference type="Gene3D" id="1.10.3930.10">
    <property type="entry name" value="Arginine deiminase"/>
    <property type="match status" value="1"/>
</dbReference>
<dbReference type="Gene3D" id="3.75.10.10">
    <property type="entry name" value="L-arginine/glycine Amidinotransferase, Chain A"/>
    <property type="match status" value="1"/>
</dbReference>
<dbReference type="HAMAP" id="MF_00242">
    <property type="entry name" value="Arg_deiminase"/>
    <property type="match status" value="1"/>
</dbReference>
<dbReference type="InterPro" id="IPR003876">
    <property type="entry name" value="Arg_deiminase"/>
</dbReference>
<dbReference type="NCBIfam" id="TIGR01078">
    <property type="entry name" value="arcA"/>
    <property type="match status" value="1"/>
</dbReference>
<dbReference type="NCBIfam" id="NF002381">
    <property type="entry name" value="PRK01388.1"/>
    <property type="match status" value="1"/>
</dbReference>
<dbReference type="PANTHER" id="PTHR47271">
    <property type="entry name" value="ARGININE DEIMINASE"/>
    <property type="match status" value="1"/>
</dbReference>
<dbReference type="PANTHER" id="PTHR47271:SF3">
    <property type="entry name" value="ARGININE DEIMINASE"/>
    <property type="match status" value="1"/>
</dbReference>
<dbReference type="Pfam" id="PF02274">
    <property type="entry name" value="ADI"/>
    <property type="match status" value="1"/>
</dbReference>
<dbReference type="PIRSF" id="PIRSF006356">
    <property type="entry name" value="Arg_deiminase"/>
    <property type="match status" value="1"/>
</dbReference>
<dbReference type="PRINTS" id="PR01466">
    <property type="entry name" value="ARGDEIMINASE"/>
</dbReference>
<dbReference type="SUPFAM" id="SSF55909">
    <property type="entry name" value="Pentein"/>
    <property type="match status" value="1"/>
</dbReference>
<comment type="catalytic activity">
    <reaction>
        <text>L-arginine + H2O = L-citrulline + NH4(+)</text>
        <dbReference type="Rhea" id="RHEA:19597"/>
        <dbReference type="ChEBI" id="CHEBI:15377"/>
        <dbReference type="ChEBI" id="CHEBI:28938"/>
        <dbReference type="ChEBI" id="CHEBI:32682"/>
        <dbReference type="ChEBI" id="CHEBI:57743"/>
        <dbReference type="EC" id="3.5.3.6"/>
    </reaction>
</comment>
<comment type="pathway">
    <text>Amino-acid degradation; L-arginine degradation via ADI pathway; carbamoyl phosphate from L-arginine: step 1/2.</text>
</comment>
<comment type="subcellular location">
    <subcellularLocation>
        <location evidence="2">Cytoplasm</location>
    </subcellularLocation>
</comment>
<comment type="similarity">
    <text evidence="2">Belongs to the arginine deiminase family.</text>
</comment>
<keyword id="KW-0056">Arginine metabolism</keyword>
<keyword id="KW-0963">Cytoplasm</keyword>
<keyword id="KW-0378">Hydrolase</keyword>
<reference key="1">
    <citation type="journal article" date="1997" name="J. Bacteriol.">
        <title>The arginine deiminase pathway in Rhizobium etli: DNA sequence analysis and functional study of the arcABC genes.</title>
        <authorList>
            <person name="D'Hooghe I."/>
            <person name="Vander Wauwe C."/>
            <person name="Michiels J."/>
            <person name="Tricot C."/>
            <person name="de Wilde P."/>
            <person name="Vanderleyden J."/>
            <person name="Stalon V."/>
        </authorList>
    </citation>
    <scope>NUCLEOTIDE SEQUENCE [GENOMIC DNA]</scope>
</reference>
<gene>
    <name type="primary">arcA</name>
</gene>
<feature type="chain" id="PRO_0000182228" description="Arginine deiminase">
    <location>
        <begin position="1"/>
        <end position="409"/>
    </location>
</feature>
<feature type="active site" description="Amidino-cysteine intermediate" evidence="1">
    <location>
        <position position="398"/>
    </location>
</feature>
<accession>O31017</accession>
<organism>
    <name type="scientific">Rhizobium etli</name>
    <dbReference type="NCBI Taxonomy" id="29449"/>
    <lineage>
        <taxon>Bacteria</taxon>
        <taxon>Pseudomonadati</taxon>
        <taxon>Pseudomonadota</taxon>
        <taxon>Alphaproteobacteria</taxon>
        <taxon>Hyphomicrobiales</taxon>
        <taxon>Rhizobiaceae</taxon>
        <taxon>Rhizobium/Agrobacterium group</taxon>
        <taxon>Rhizobium</taxon>
    </lineage>
</organism>
<name>ARCA_RHIET</name>
<protein>
    <recommendedName>
        <fullName>Arginine deiminase</fullName>
        <shortName>ADI</shortName>
        <ecNumber>3.5.3.6</ecNumber>
    </recommendedName>
    <alternativeName>
        <fullName>Arginine dihydrolase</fullName>
        <shortName>AD</shortName>
    </alternativeName>
</protein>
<proteinExistence type="inferred from homology"/>